<keyword id="KW-0067">ATP-binding</keyword>
<keyword id="KW-0963">Cytoplasm</keyword>
<keyword id="KW-0436">Ligase</keyword>
<keyword id="KW-0547">Nucleotide-binding</keyword>
<keyword id="KW-0566">Pantothenate biosynthesis</keyword>
<keyword id="KW-1185">Reference proteome</keyword>
<accession>Q6ALV3</accession>
<dbReference type="EC" id="6.3.2.1" evidence="1"/>
<dbReference type="EMBL" id="CR522870">
    <property type="protein sequence ID" value="CAG36672.1"/>
    <property type="molecule type" value="Genomic_DNA"/>
</dbReference>
<dbReference type="RefSeq" id="WP_011189184.1">
    <property type="nucleotide sequence ID" value="NC_006138.1"/>
</dbReference>
<dbReference type="SMR" id="Q6ALV3"/>
<dbReference type="STRING" id="177439.DP1943"/>
<dbReference type="KEGG" id="dps:DP1943"/>
<dbReference type="eggNOG" id="COG0414">
    <property type="taxonomic scope" value="Bacteria"/>
</dbReference>
<dbReference type="HOGENOM" id="CLU_047148_0_0_7"/>
<dbReference type="OrthoDB" id="9773087at2"/>
<dbReference type="UniPathway" id="UPA00028">
    <property type="reaction ID" value="UER00005"/>
</dbReference>
<dbReference type="Proteomes" id="UP000000602">
    <property type="component" value="Chromosome"/>
</dbReference>
<dbReference type="GO" id="GO:0005829">
    <property type="term" value="C:cytosol"/>
    <property type="evidence" value="ECO:0007669"/>
    <property type="project" value="TreeGrafter"/>
</dbReference>
<dbReference type="GO" id="GO:0005524">
    <property type="term" value="F:ATP binding"/>
    <property type="evidence" value="ECO:0007669"/>
    <property type="project" value="UniProtKB-KW"/>
</dbReference>
<dbReference type="GO" id="GO:0004592">
    <property type="term" value="F:pantoate-beta-alanine ligase activity"/>
    <property type="evidence" value="ECO:0007669"/>
    <property type="project" value="UniProtKB-UniRule"/>
</dbReference>
<dbReference type="GO" id="GO:0015940">
    <property type="term" value="P:pantothenate biosynthetic process"/>
    <property type="evidence" value="ECO:0007669"/>
    <property type="project" value="UniProtKB-UniRule"/>
</dbReference>
<dbReference type="CDD" id="cd00560">
    <property type="entry name" value="PanC"/>
    <property type="match status" value="1"/>
</dbReference>
<dbReference type="Gene3D" id="3.40.50.620">
    <property type="entry name" value="HUPs"/>
    <property type="match status" value="1"/>
</dbReference>
<dbReference type="Gene3D" id="3.30.1300.10">
    <property type="entry name" value="Pantoate-beta-alanine ligase, C-terminal domain"/>
    <property type="match status" value="1"/>
</dbReference>
<dbReference type="HAMAP" id="MF_00158">
    <property type="entry name" value="PanC"/>
    <property type="match status" value="1"/>
</dbReference>
<dbReference type="InterPro" id="IPR004821">
    <property type="entry name" value="Cyt_trans-like"/>
</dbReference>
<dbReference type="InterPro" id="IPR003721">
    <property type="entry name" value="Pantoate_ligase"/>
</dbReference>
<dbReference type="InterPro" id="IPR042176">
    <property type="entry name" value="Pantoate_ligase_C"/>
</dbReference>
<dbReference type="InterPro" id="IPR014729">
    <property type="entry name" value="Rossmann-like_a/b/a_fold"/>
</dbReference>
<dbReference type="NCBIfam" id="TIGR00125">
    <property type="entry name" value="cyt_tran_rel"/>
    <property type="match status" value="1"/>
</dbReference>
<dbReference type="NCBIfam" id="TIGR00018">
    <property type="entry name" value="panC"/>
    <property type="match status" value="1"/>
</dbReference>
<dbReference type="PANTHER" id="PTHR21299">
    <property type="entry name" value="CYTIDYLATE KINASE/PANTOATE-BETA-ALANINE LIGASE"/>
    <property type="match status" value="1"/>
</dbReference>
<dbReference type="PANTHER" id="PTHR21299:SF1">
    <property type="entry name" value="PANTOATE--BETA-ALANINE LIGASE"/>
    <property type="match status" value="1"/>
</dbReference>
<dbReference type="Pfam" id="PF02569">
    <property type="entry name" value="Pantoate_ligase"/>
    <property type="match status" value="1"/>
</dbReference>
<dbReference type="SUPFAM" id="SSF52374">
    <property type="entry name" value="Nucleotidylyl transferase"/>
    <property type="match status" value="1"/>
</dbReference>
<evidence type="ECO:0000255" key="1">
    <source>
        <dbReference type="HAMAP-Rule" id="MF_00158"/>
    </source>
</evidence>
<gene>
    <name evidence="1" type="primary">panC</name>
    <name type="ordered locus">DP1943</name>
</gene>
<sequence>MKKISSRQEIREQVKKWQEQGLTVALVPTMGCFHQGHLSLIKKGREIADRLIVSLFVNPIQFGPGEDLDAYPRPYEKDSRLAEELGTDVLFCPETTEMYGPNFQTNISVTTLTADLCGAGRPGHFDGVATVVTKLFHLCQPDFAIFGEKDFQQLAMIKQLVIDLDFDLQIISCPIYREDDGLAMSSRNKYLNAEQRLKALCLSQALEVAKDYVLARSAAGKTIESDEVITKARGVIIDAGYEPEYISIVDQQTLEPSPTVQPGNVMALAVRIAERIRLIDNSALLT</sequence>
<proteinExistence type="inferred from homology"/>
<protein>
    <recommendedName>
        <fullName evidence="1">Pantothenate synthetase</fullName>
        <shortName evidence="1">PS</shortName>
        <ecNumber evidence="1">6.3.2.1</ecNumber>
    </recommendedName>
    <alternativeName>
        <fullName evidence="1">Pantoate--beta-alanine ligase</fullName>
    </alternativeName>
    <alternativeName>
        <fullName evidence="1">Pantoate-activating enzyme</fullName>
    </alternativeName>
</protein>
<name>PANC_DESPS</name>
<comment type="function">
    <text evidence="1">Catalyzes the condensation of pantoate with beta-alanine in an ATP-dependent reaction via a pantoyl-adenylate intermediate.</text>
</comment>
<comment type="catalytic activity">
    <reaction evidence="1">
        <text>(R)-pantoate + beta-alanine + ATP = (R)-pantothenate + AMP + diphosphate + H(+)</text>
        <dbReference type="Rhea" id="RHEA:10912"/>
        <dbReference type="ChEBI" id="CHEBI:15378"/>
        <dbReference type="ChEBI" id="CHEBI:15980"/>
        <dbReference type="ChEBI" id="CHEBI:29032"/>
        <dbReference type="ChEBI" id="CHEBI:30616"/>
        <dbReference type="ChEBI" id="CHEBI:33019"/>
        <dbReference type="ChEBI" id="CHEBI:57966"/>
        <dbReference type="ChEBI" id="CHEBI:456215"/>
        <dbReference type="EC" id="6.3.2.1"/>
    </reaction>
</comment>
<comment type="pathway">
    <text evidence="1">Cofactor biosynthesis; (R)-pantothenate biosynthesis; (R)-pantothenate from (R)-pantoate and beta-alanine: step 1/1.</text>
</comment>
<comment type="subunit">
    <text evidence="1">Homodimer.</text>
</comment>
<comment type="subcellular location">
    <subcellularLocation>
        <location evidence="1">Cytoplasm</location>
    </subcellularLocation>
</comment>
<comment type="miscellaneous">
    <text evidence="1">The reaction proceeds by a bi uni uni bi ping pong mechanism.</text>
</comment>
<comment type="similarity">
    <text evidence="1">Belongs to the pantothenate synthetase family.</text>
</comment>
<reference key="1">
    <citation type="journal article" date="2004" name="Environ. Microbiol.">
        <title>The genome of Desulfotalea psychrophila, a sulfate-reducing bacterium from permanently cold Arctic sediments.</title>
        <authorList>
            <person name="Rabus R."/>
            <person name="Ruepp A."/>
            <person name="Frickey T."/>
            <person name="Rattei T."/>
            <person name="Fartmann B."/>
            <person name="Stark M."/>
            <person name="Bauer M."/>
            <person name="Zibat A."/>
            <person name="Lombardot T."/>
            <person name="Becker I."/>
            <person name="Amann J."/>
            <person name="Gellner K."/>
            <person name="Teeling H."/>
            <person name="Leuschner W.D."/>
            <person name="Gloeckner F.-O."/>
            <person name="Lupas A.N."/>
            <person name="Amann R."/>
            <person name="Klenk H.-P."/>
        </authorList>
    </citation>
    <scope>NUCLEOTIDE SEQUENCE [LARGE SCALE GENOMIC DNA]</scope>
    <source>
        <strain>DSM 12343 / LSv54</strain>
    </source>
</reference>
<organism>
    <name type="scientific">Desulfotalea psychrophila (strain LSv54 / DSM 12343)</name>
    <dbReference type="NCBI Taxonomy" id="177439"/>
    <lineage>
        <taxon>Bacteria</taxon>
        <taxon>Pseudomonadati</taxon>
        <taxon>Thermodesulfobacteriota</taxon>
        <taxon>Desulfobulbia</taxon>
        <taxon>Desulfobulbales</taxon>
        <taxon>Desulfocapsaceae</taxon>
        <taxon>Desulfotalea</taxon>
    </lineage>
</organism>
<feature type="chain" id="PRO_0000305439" description="Pantothenate synthetase">
    <location>
        <begin position="1"/>
        <end position="286"/>
    </location>
</feature>
<feature type="active site" description="Proton donor" evidence="1">
    <location>
        <position position="37"/>
    </location>
</feature>
<feature type="binding site" evidence="1">
    <location>
        <begin position="30"/>
        <end position="37"/>
    </location>
    <ligand>
        <name>ATP</name>
        <dbReference type="ChEBI" id="CHEBI:30616"/>
    </ligand>
</feature>
<feature type="binding site" evidence="1">
    <location>
        <position position="61"/>
    </location>
    <ligand>
        <name>(R)-pantoate</name>
        <dbReference type="ChEBI" id="CHEBI:15980"/>
    </ligand>
</feature>
<feature type="binding site" evidence="1">
    <location>
        <position position="61"/>
    </location>
    <ligand>
        <name>beta-alanine</name>
        <dbReference type="ChEBI" id="CHEBI:57966"/>
    </ligand>
</feature>
<feature type="binding site" evidence="1">
    <location>
        <begin position="147"/>
        <end position="150"/>
    </location>
    <ligand>
        <name>ATP</name>
        <dbReference type="ChEBI" id="CHEBI:30616"/>
    </ligand>
</feature>
<feature type="binding site" evidence="1">
    <location>
        <position position="153"/>
    </location>
    <ligand>
        <name>(R)-pantoate</name>
        <dbReference type="ChEBI" id="CHEBI:15980"/>
    </ligand>
</feature>
<feature type="binding site" evidence="1">
    <location>
        <begin position="184"/>
        <end position="187"/>
    </location>
    <ligand>
        <name>ATP</name>
        <dbReference type="ChEBI" id="CHEBI:30616"/>
    </ligand>
</feature>